<proteinExistence type="inferred from homology"/>
<reference key="1">
    <citation type="journal article" date="2004" name="Nat. Genet.">
        <title>Comparison of genome degradation in Paratyphi A and Typhi, human-restricted serovars of Salmonella enterica that cause typhoid.</title>
        <authorList>
            <person name="McClelland M."/>
            <person name="Sanderson K.E."/>
            <person name="Clifton S.W."/>
            <person name="Latreille P."/>
            <person name="Porwollik S."/>
            <person name="Sabo A."/>
            <person name="Meyer R."/>
            <person name="Bieri T."/>
            <person name="Ozersky P."/>
            <person name="McLellan M."/>
            <person name="Harkins C.R."/>
            <person name="Wang C."/>
            <person name="Nguyen C."/>
            <person name="Berghoff A."/>
            <person name="Elliott G."/>
            <person name="Kohlberg S."/>
            <person name="Strong C."/>
            <person name="Du F."/>
            <person name="Carter J."/>
            <person name="Kremizki C."/>
            <person name="Layman D."/>
            <person name="Leonard S."/>
            <person name="Sun H."/>
            <person name="Fulton L."/>
            <person name="Nash W."/>
            <person name="Miner T."/>
            <person name="Minx P."/>
            <person name="Delehaunty K."/>
            <person name="Fronick C."/>
            <person name="Magrini V."/>
            <person name="Nhan M."/>
            <person name="Warren W."/>
            <person name="Florea L."/>
            <person name="Spieth J."/>
            <person name="Wilson R.K."/>
        </authorList>
    </citation>
    <scope>NUCLEOTIDE SEQUENCE [LARGE SCALE GENOMIC DNA]</scope>
    <source>
        <strain>ATCC 9150 / SARB42</strain>
    </source>
</reference>
<accession>Q5PCA7</accession>
<keyword id="KW-0029">Amino-acid transport</keyword>
<keyword id="KW-0997">Cell inner membrane</keyword>
<keyword id="KW-1003">Cell membrane</keyword>
<keyword id="KW-0472">Membrane</keyword>
<keyword id="KW-0769">Symport</keyword>
<keyword id="KW-0812">Transmembrane</keyword>
<keyword id="KW-1133">Transmembrane helix</keyword>
<keyword id="KW-0813">Transport</keyword>
<evidence type="ECO:0000255" key="1">
    <source>
        <dbReference type="HAMAP-Rule" id="MF_01582"/>
    </source>
</evidence>
<feature type="chain" id="PRO_0000309117" description="Serine/threonine transporter SstT">
    <location>
        <begin position="1"/>
        <end position="414"/>
    </location>
</feature>
<feature type="transmembrane region" description="Helical" evidence="1">
    <location>
        <begin position="16"/>
        <end position="36"/>
    </location>
</feature>
<feature type="transmembrane region" description="Helical" evidence="1">
    <location>
        <begin position="46"/>
        <end position="66"/>
    </location>
</feature>
<feature type="transmembrane region" description="Helical" evidence="1">
    <location>
        <begin position="84"/>
        <end position="104"/>
    </location>
</feature>
<feature type="transmembrane region" description="Helical" evidence="1">
    <location>
        <begin position="143"/>
        <end position="163"/>
    </location>
</feature>
<feature type="transmembrane region" description="Helical" evidence="1">
    <location>
        <begin position="180"/>
        <end position="200"/>
    </location>
</feature>
<feature type="transmembrane region" description="Helical" evidence="1">
    <location>
        <begin position="219"/>
        <end position="239"/>
    </location>
</feature>
<feature type="transmembrane region" description="Helical" evidence="1">
    <location>
        <begin position="300"/>
        <end position="320"/>
    </location>
</feature>
<feature type="transmembrane region" description="Helical" evidence="1">
    <location>
        <begin position="332"/>
        <end position="352"/>
    </location>
</feature>
<gene>
    <name evidence="1" type="primary">sstT</name>
    <name type="ordered locus">SPA3094</name>
</gene>
<protein>
    <recommendedName>
        <fullName evidence="1">Serine/threonine transporter SstT</fullName>
    </recommendedName>
    <alternativeName>
        <fullName evidence="1">Na(+)/serine-threonine symporter</fullName>
    </alternativeName>
</protein>
<name>SSTT_SALPA</name>
<comment type="function">
    <text evidence="1">Involved in the import of serine and threonine into the cell, with the concomitant import of sodium (symport system).</text>
</comment>
<comment type="catalytic activity">
    <reaction evidence="1">
        <text>L-serine(in) + Na(+)(in) = L-serine(out) + Na(+)(out)</text>
        <dbReference type="Rhea" id="RHEA:29575"/>
        <dbReference type="ChEBI" id="CHEBI:29101"/>
        <dbReference type="ChEBI" id="CHEBI:33384"/>
    </reaction>
    <physiologicalReaction direction="right-to-left" evidence="1">
        <dbReference type="Rhea" id="RHEA:29577"/>
    </physiologicalReaction>
</comment>
<comment type="catalytic activity">
    <reaction evidence="1">
        <text>L-threonine(in) + Na(+)(in) = L-threonine(out) + Na(+)(out)</text>
        <dbReference type="Rhea" id="RHEA:69999"/>
        <dbReference type="ChEBI" id="CHEBI:29101"/>
        <dbReference type="ChEBI" id="CHEBI:57926"/>
    </reaction>
    <physiologicalReaction direction="right-to-left" evidence="1">
        <dbReference type="Rhea" id="RHEA:70001"/>
    </physiologicalReaction>
</comment>
<comment type="subcellular location">
    <subcellularLocation>
        <location evidence="1">Cell inner membrane</location>
        <topology evidence="1">Multi-pass membrane protein</topology>
    </subcellularLocation>
</comment>
<comment type="similarity">
    <text evidence="1">Belongs to the dicarboxylate/amino acid:cation symporter (DAACS) (TC 2.A.23) family.</text>
</comment>
<dbReference type="EMBL" id="CP000026">
    <property type="protein sequence ID" value="AAV78927.1"/>
    <property type="molecule type" value="Genomic_DNA"/>
</dbReference>
<dbReference type="RefSeq" id="WP_000235363.1">
    <property type="nucleotide sequence ID" value="NC_006511.1"/>
</dbReference>
<dbReference type="SMR" id="Q5PCA7"/>
<dbReference type="KEGG" id="spt:SPA3094"/>
<dbReference type="HOGENOM" id="CLU_044581_0_0_6"/>
<dbReference type="Proteomes" id="UP000008185">
    <property type="component" value="Chromosome"/>
</dbReference>
<dbReference type="GO" id="GO:0005886">
    <property type="term" value="C:plasma membrane"/>
    <property type="evidence" value="ECO:0007669"/>
    <property type="project" value="UniProtKB-SubCell"/>
</dbReference>
<dbReference type="GO" id="GO:0005295">
    <property type="term" value="F:neutral L-amino acid:sodium symporter activity"/>
    <property type="evidence" value="ECO:0007669"/>
    <property type="project" value="TreeGrafter"/>
</dbReference>
<dbReference type="GO" id="GO:0032329">
    <property type="term" value="P:serine transport"/>
    <property type="evidence" value="ECO:0007669"/>
    <property type="project" value="InterPro"/>
</dbReference>
<dbReference type="GO" id="GO:0015826">
    <property type="term" value="P:threonine transport"/>
    <property type="evidence" value="ECO:0007669"/>
    <property type="project" value="InterPro"/>
</dbReference>
<dbReference type="FunFam" id="1.10.3860.10:FF:000003">
    <property type="entry name" value="Serine/threonine transporter sstT"/>
    <property type="match status" value="1"/>
</dbReference>
<dbReference type="Gene3D" id="1.10.3860.10">
    <property type="entry name" value="Sodium:dicarboxylate symporter"/>
    <property type="match status" value="1"/>
</dbReference>
<dbReference type="HAMAP" id="MF_01582">
    <property type="entry name" value="Ser_Thr_transp_SstT"/>
    <property type="match status" value="1"/>
</dbReference>
<dbReference type="InterPro" id="IPR001991">
    <property type="entry name" value="Na-dicarboxylate_symporter"/>
</dbReference>
<dbReference type="InterPro" id="IPR036458">
    <property type="entry name" value="Na:dicarbo_symporter_sf"/>
</dbReference>
<dbReference type="InterPro" id="IPR023025">
    <property type="entry name" value="Ser_Thr_transp_SstT"/>
</dbReference>
<dbReference type="NCBIfam" id="NF010151">
    <property type="entry name" value="PRK13628.1"/>
    <property type="match status" value="1"/>
</dbReference>
<dbReference type="PANTHER" id="PTHR42865">
    <property type="entry name" value="PROTON/GLUTAMATE-ASPARTATE SYMPORTER"/>
    <property type="match status" value="1"/>
</dbReference>
<dbReference type="PANTHER" id="PTHR42865:SF8">
    <property type="entry name" value="SERINE_THREONINE TRANSPORTER SSTT"/>
    <property type="match status" value="1"/>
</dbReference>
<dbReference type="Pfam" id="PF00375">
    <property type="entry name" value="SDF"/>
    <property type="match status" value="1"/>
</dbReference>
<dbReference type="PRINTS" id="PR00173">
    <property type="entry name" value="EDTRNSPORT"/>
</dbReference>
<dbReference type="SUPFAM" id="SSF118215">
    <property type="entry name" value="Proton glutamate symport protein"/>
    <property type="match status" value="1"/>
</dbReference>
<dbReference type="PROSITE" id="PS00713">
    <property type="entry name" value="NA_DICARBOXYL_SYMP_1"/>
    <property type="match status" value="1"/>
</dbReference>
<sequence>MATQRASGLLQRLAQGSLVKQILVGLVLGILLAWISKPAAEAVGLLGTLFVGALKAVAPVLVLMLVMASIANHQHGQKTNIRPILFLYLLGTFSAALAAVVFSFAFPSTLHLSSSAQDIVPPSGIVEVLRGLLMSMVSNPIDALLNANYIGILVWAVGLGFALRHGNETTKNLVNDMSNAVTFMVKLVIRFAPVGIFGLVSSTLATTGFSTLWGYAHLLVVLIGCMLLVALVVNPLLVFWKIRRNPYPLVFACLRESGVYAFFTRSSAANIPVNMALCEKLNLDRDTYSVSIPLGATINMAGAAITITVLTLAAVHTLGVPVDLPTALLLSVVASLCACGASGVAGGSLLLIPLACNMFGIPNDIAMQVVAVGFIIGVLQDSCETALNSSTDVLFTAAACQAEDERLANNALRS</sequence>
<organism>
    <name type="scientific">Salmonella paratyphi A (strain ATCC 9150 / SARB42)</name>
    <dbReference type="NCBI Taxonomy" id="295319"/>
    <lineage>
        <taxon>Bacteria</taxon>
        <taxon>Pseudomonadati</taxon>
        <taxon>Pseudomonadota</taxon>
        <taxon>Gammaproteobacteria</taxon>
        <taxon>Enterobacterales</taxon>
        <taxon>Enterobacteriaceae</taxon>
        <taxon>Salmonella</taxon>
    </lineage>
</organism>